<sequence>MTVTMRQMLEAGVHFGHQTRFWNPRMAPYIFGQRNKIHIVNLEKTMGKYNEAMNYVRKLAANRGTILLVGTKRQAREIVSEEASRAGMPFVDERWLGGMLTNFKTVKQSIKRLKEMEAMVEDGSIERLSKKEALMATREMDKLKKSIGGIKDMGGLPDAMFVIDVGYHKIAITEAQKLGIPIVAVVDTNHSPEGIDYVIPGNDDSSRAIRLYARGVADAVLEGRSQALQDVVAAGSDEFVEVQEDGSDEQA</sequence>
<feature type="chain" id="PRO_0000134121" description="Small ribosomal subunit protein uS2">
    <location>
        <begin position="1"/>
        <end position="251"/>
    </location>
</feature>
<evidence type="ECO:0000255" key="1">
    <source>
        <dbReference type="HAMAP-Rule" id="MF_00291"/>
    </source>
</evidence>
<evidence type="ECO:0000305" key="2"/>
<name>RS2_AROAE</name>
<dbReference type="EMBL" id="CR555306">
    <property type="protein sequence ID" value="CAI09539.1"/>
    <property type="molecule type" value="Genomic_DNA"/>
</dbReference>
<dbReference type="RefSeq" id="WP_011239199.1">
    <property type="nucleotide sequence ID" value="NC_006513.1"/>
</dbReference>
<dbReference type="SMR" id="Q5NZH5"/>
<dbReference type="STRING" id="76114.ebA5986"/>
<dbReference type="KEGG" id="eba:ebA5986"/>
<dbReference type="eggNOG" id="COG0052">
    <property type="taxonomic scope" value="Bacteria"/>
</dbReference>
<dbReference type="HOGENOM" id="CLU_040318_1_2_4"/>
<dbReference type="OrthoDB" id="9808036at2"/>
<dbReference type="Proteomes" id="UP000006552">
    <property type="component" value="Chromosome"/>
</dbReference>
<dbReference type="GO" id="GO:0022627">
    <property type="term" value="C:cytosolic small ribosomal subunit"/>
    <property type="evidence" value="ECO:0007669"/>
    <property type="project" value="TreeGrafter"/>
</dbReference>
<dbReference type="GO" id="GO:0003735">
    <property type="term" value="F:structural constituent of ribosome"/>
    <property type="evidence" value="ECO:0007669"/>
    <property type="project" value="InterPro"/>
</dbReference>
<dbReference type="GO" id="GO:0006412">
    <property type="term" value="P:translation"/>
    <property type="evidence" value="ECO:0007669"/>
    <property type="project" value="UniProtKB-UniRule"/>
</dbReference>
<dbReference type="CDD" id="cd01425">
    <property type="entry name" value="RPS2"/>
    <property type="match status" value="1"/>
</dbReference>
<dbReference type="FunFam" id="1.10.287.610:FF:000001">
    <property type="entry name" value="30S ribosomal protein S2"/>
    <property type="match status" value="1"/>
</dbReference>
<dbReference type="Gene3D" id="3.40.50.10490">
    <property type="entry name" value="Glucose-6-phosphate isomerase like protein, domain 1"/>
    <property type="match status" value="1"/>
</dbReference>
<dbReference type="Gene3D" id="1.10.287.610">
    <property type="entry name" value="Helix hairpin bin"/>
    <property type="match status" value="1"/>
</dbReference>
<dbReference type="HAMAP" id="MF_00291_B">
    <property type="entry name" value="Ribosomal_uS2_B"/>
    <property type="match status" value="1"/>
</dbReference>
<dbReference type="InterPro" id="IPR001865">
    <property type="entry name" value="Ribosomal_uS2"/>
</dbReference>
<dbReference type="InterPro" id="IPR005706">
    <property type="entry name" value="Ribosomal_uS2_bac/mit/plastid"/>
</dbReference>
<dbReference type="InterPro" id="IPR018130">
    <property type="entry name" value="Ribosomal_uS2_CS"/>
</dbReference>
<dbReference type="InterPro" id="IPR023591">
    <property type="entry name" value="Ribosomal_uS2_flav_dom_sf"/>
</dbReference>
<dbReference type="NCBIfam" id="TIGR01011">
    <property type="entry name" value="rpsB_bact"/>
    <property type="match status" value="1"/>
</dbReference>
<dbReference type="PANTHER" id="PTHR12534">
    <property type="entry name" value="30S RIBOSOMAL PROTEIN S2 PROKARYOTIC AND ORGANELLAR"/>
    <property type="match status" value="1"/>
</dbReference>
<dbReference type="PANTHER" id="PTHR12534:SF0">
    <property type="entry name" value="SMALL RIBOSOMAL SUBUNIT PROTEIN US2M"/>
    <property type="match status" value="1"/>
</dbReference>
<dbReference type="Pfam" id="PF00318">
    <property type="entry name" value="Ribosomal_S2"/>
    <property type="match status" value="1"/>
</dbReference>
<dbReference type="PRINTS" id="PR00395">
    <property type="entry name" value="RIBOSOMALS2"/>
</dbReference>
<dbReference type="SUPFAM" id="SSF52313">
    <property type="entry name" value="Ribosomal protein S2"/>
    <property type="match status" value="1"/>
</dbReference>
<dbReference type="PROSITE" id="PS00962">
    <property type="entry name" value="RIBOSOMAL_S2_1"/>
    <property type="match status" value="1"/>
</dbReference>
<gene>
    <name evidence="1" type="primary">rpsB</name>
    <name type="ordered locus">AZOSEA34140</name>
    <name type="ORF">ebA5986</name>
</gene>
<keyword id="KW-1185">Reference proteome</keyword>
<keyword id="KW-0687">Ribonucleoprotein</keyword>
<keyword id="KW-0689">Ribosomal protein</keyword>
<protein>
    <recommendedName>
        <fullName evidence="1">Small ribosomal subunit protein uS2</fullName>
    </recommendedName>
    <alternativeName>
        <fullName evidence="2">30S ribosomal protein S2</fullName>
    </alternativeName>
</protein>
<proteinExistence type="inferred from homology"/>
<reference key="1">
    <citation type="journal article" date="2005" name="Arch. Microbiol.">
        <title>The genome sequence of an anaerobic aromatic-degrading denitrifying bacterium, strain EbN1.</title>
        <authorList>
            <person name="Rabus R."/>
            <person name="Kube M."/>
            <person name="Heider J."/>
            <person name="Beck A."/>
            <person name="Heitmann K."/>
            <person name="Widdel F."/>
            <person name="Reinhardt R."/>
        </authorList>
    </citation>
    <scope>NUCLEOTIDE SEQUENCE [LARGE SCALE GENOMIC DNA]</scope>
    <source>
        <strain>DSM 19018 / LMG 30748 / EbN1</strain>
    </source>
</reference>
<accession>Q5NZH5</accession>
<comment type="similarity">
    <text evidence="1">Belongs to the universal ribosomal protein uS2 family.</text>
</comment>
<organism>
    <name type="scientific">Aromatoleum aromaticum (strain DSM 19018 / LMG 30748 / EbN1)</name>
    <name type="common">Azoarcus sp. (strain EbN1)</name>
    <dbReference type="NCBI Taxonomy" id="76114"/>
    <lineage>
        <taxon>Bacteria</taxon>
        <taxon>Pseudomonadati</taxon>
        <taxon>Pseudomonadota</taxon>
        <taxon>Betaproteobacteria</taxon>
        <taxon>Rhodocyclales</taxon>
        <taxon>Rhodocyclaceae</taxon>
        <taxon>Aromatoleum</taxon>
    </lineage>
</organism>